<reference key="1">
    <citation type="submission" date="2003-01" db="EMBL/GenBank/DDBJ databases">
        <title>Chloroplast DNA phylogeny of tribe Heliantheae (Asteraceae).</title>
        <authorList>
            <person name="Panero J.L."/>
            <person name="Baldwin B.G."/>
            <person name="Schilling E.E."/>
            <person name="Clevinger J.A."/>
        </authorList>
    </citation>
    <scope>NUCLEOTIDE SEQUENCE [GENOMIC DNA]</scope>
</reference>
<sequence length="166" mass="19497">MFPMVTEFMNYGQQTVRAARYIGQGFMITLSHANRLPVTIQYPYEKLITSERFRGRIHFEFDKCIACEVCVRVCPIDLPVVDWKLETHIRKKRLLNYSIDFGICIFCGNCVEYCPTNCLSMTEEYELSTYDRHELNYNQIALGRLPMSIIDDYTIRTILNLPEIKT</sequence>
<comment type="function">
    <text evidence="1">NDH shuttles electrons from NAD(P)H:plastoquinone, via FMN and iron-sulfur (Fe-S) centers, to quinones in the photosynthetic chain and possibly in a chloroplast respiratory chain. The immediate electron acceptor for the enzyme in this species is believed to be plastoquinone. Couples the redox reaction to proton translocation, and thus conserves the redox energy in a proton gradient.</text>
</comment>
<comment type="catalytic activity">
    <reaction evidence="1">
        <text>a plastoquinone + NADH + (n+1) H(+)(in) = a plastoquinol + NAD(+) + n H(+)(out)</text>
        <dbReference type="Rhea" id="RHEA:42608"/>
        <dbReference type="Rhea" id="RHEA-COMP:9561"/>
        <dbReference type="Rhea" id="RHEA-COMP:9562"/>
        <dbReference type="ChEBI" id="CHEBI:15378"/>
        <dbReference type="ChEBI" id="CHEBI:17757"/>
        <dbReference type="ChEBI" id="CHEBI:57540"/>
        <dbReference type="ChEBI" id="CHEBI:57945"/>
        <dbReference type="ChEBI" id="CHEBI:62192"/>
    </reaction>
</comment>
<comment type="catalytic activity">
    <reaction evidence="1">
        <text>a plastoquinone + NADPH + (n+1) H(+)(in) = a plastoquinol + NADP(+) + n H(+)(out)</text>
        <dbReference type="Rhea" id="RHEA:42612"/>
        <dbReference type="Rhea" id="RHEA-COMP:9561"/>
        <dbReference type="Rhea" id="RHEA-COMP:9562"/>
        <dbReference type="ChEBI" id="CHEBI:15378"/>
        <dbReference type="ChEBI" id="CHEBI:17757"/>
        <dbReference type="ChEBI" id="CHEBI:57783"/>
        <dbReference type="ChEBI" id="CHEBI:58349"/>
        <dbReference type="ChEBI" id="CHEBI:62192"/>
    </reaction>
</comment>
<comment type="cofactor">
    <cofactor evidence="1">
        <name>[4Fe-4S] cluster</name>
        <dbReference type="ChEBI" id="CHEBI:49883"/>
    </cofactor>
    <text evidence="1">Binds 2 [4Fe-4S] clusters per subunit.</text>
</comment>
<comment type="subunit">
    <text evidence="1">NDH is composed of at least 16 different subunits, 5 of which are encoded in the nucleus.</text>
</comment>
<comment type="subcellular location">
    <subcellularLocation>
        <location evidence="1">Plastid</location>
        <location evidence="1">Chloroplast thylakoid membrane</location>
        <topology evidence="1">Peripheral membrane protein</topology>
    </subcellularLocation>
</comment>
<comment type="similarity">
    <text evidence="1">Belongs to the complex I 23 kDa subunit family.</text>
</comment>
<keyword id="KW-0004">4Fe-4S</keyword>
<keyword id="KW-0150">Chloroplast</keyword>
<keyword id="KW-0408">Iron</keyword>
<keyword id="KW-0411">Iron-sulfur</keyword>
<keyword id="KW-0472">Membrane</keyword>
<keyword id="KW-0479">Metal-binding</keyword>
<keyword id="KW-0520">NAD</keyword>
<keyword id="KW-0521">NADP</keyword>
<keyword id="KW-0934">Plastid</keyword>
<keyword id="KW-0618">Plastoquinone</keyword>
<keyword id="KW-0874">Quinone</keyword>
<keyword id="KW-0677">Repeat</keyword>
<keyword id="KW-0793">Thylakoid</keyword>
<keyword id="KW-1278">Translocase</keyword>
<name>NDHI_TRIBB</name>
<organism>
    <name type="scientific">Tridax balbisioides</name>
    <name type="common">Coatbuttons</name>
    <dbReference type="NCBI Taxonomy" id="183093"/>
    <lineage>
        <taxon>Eukaryota</taxon>
        <taxon>Viridiplantae</taxon>
        <taxon>Streptophyta</taxon>
        <taxon>Embryophyta</taxon>
        <taxon>Tracheophyta</taxon>
        <taxon>Spermatophyta</taxon>
        <taxon>Magnoliopsida</taxon>
        <taxon>eudicotyledons</taxon>
        <taxon>Gunneridae</taxon>
        <taxon>Pentapetalae</taxon>
        <taxon>asterids</taxon>
        <taxon>campanulids</taxon>
        <taxon>Asterales</taxon>
        <taxon>Asteraceae</taxon>
        <taxon>Asteroideae</taxon>
        <taxon>Heliantheae alliance</taxon>
        <taxon>Millerieae</taxon>
        <taxon>Tridax</taxon>
    </lineage>
</organism>
<gene>
    <name evidence="1" type="primary">ndhI</name>
</gene>
<proteinExistence type="inferred from homology"/>
<accession>Q8HVK0</accession>
<evidence type="ECO:0000255" key="1">
    <source>
        <dbReference type="HAMAP-Rule" id="MF_01351"/>
    </source>
</evidence>
<dbReference type="EC" id="7.1.1.-" evidence="1"/>
<dbReference type="EMBL" id="AF383863">
    <property type="protein sequence ID" value="AAN61804.1"/>
    <property type="molecule type" value="Genomic_DNA"/>
</dbReference>
<dbReference type="SMR" id="Q8HVK0"/>
<dbReference type="GO" id="GO:0009535">
    <property type="term" value="C:chloroplast thylakoid membrane"/>
    <property type="evidence" value="ECO:0007669"/>
    <property type="project" value="UniProtKB-SubCell"/>
</dbReference>
<dbReference type="GO" id="GO:0051539">
    <property type="term" value="F:4 iron, 4 sulfur cluster binding"/>
    <property type="evidence" value="ECO:0007669"/>
    <property type="project" value="UniProtKB-KW"/>
</dbReference>
<dbReference type="GO" id="GO:0005506">
    <property type="term" value="F:iron ion binding"/>
    <property type="evidence" value="ECO:0007669"/>
    <property type="project" value="UniProtKB-UniRule"/>
</dbReference>
<dbReference type="GO" id="GO:0008137">
    <property type="term" value="F:NADH dehydrogenase (ubiquinone) activity"/>
    <property type="evidence" value="ECO:0007669"/>
    <property type="project" value="InterPro"/>
</dbReference>
<dbReference type="GO" id="GO:0048038">
    <property type="term" value="F:quinone binding"/>
    <property type="evidence" value="ECO:0007669"/>
    <property type="project" value="UniProtKB-KW"/>
</dbReference>
<dbReference type="GO" id="GO:0019684">
    <property type="term" value="P:photosynthesis, light reaction"/>
    <property type="evidence" value="ECO:0007669"/>
    <property type="project" value="UniProtKB-UniRule"/>
</dbReference>
<dbReference type="FunFam" id="3.30.70.3270:FF:000006">
    <property type="entry name" value="NAD(P)H-quinone oxidoreductase subunit I, chloroplastic"/>
    <property type="match status" value="1"/>
</dbReference>
<dbReference type="Gene3D" id="3.30.70.3270">
    <property type="match status" value="1"/>
</dbReference>
<dbReference type="HAMAP" id="MF_01351">
    <property type="entry name" value="NDH1_NuoI"/>
    <property type="match status" value="1"/>
</dbReference>
<dbReference type="InterPro" id="IPR017896">
    <property type="entry name" value="4Fe4S_Fe-S-bd"/>
</dbReference>
<dbReference type="InterPro" id="IPR017900">
    <property type="entry name" value="4Fe4S_Fe_S_CS"/>
</dbReference>
<dbReference type="InterPro" id="IPR010226">
    <property type="entry name" value="NADH_quinone_OxRdtase_chainI"/>
</dbReference>
<dbReference type="InterPro" id="IPR004497">
    <property type="entry name" value="NDHI"/>
</dbReference>
<dbReference type="NCBIfam" id="TIGR00403">
    <property type="entry name" value="ndhI"/>
    <property type="match status" value="1"/>
</dbReference>
<dbReference type="NCBIfam" id="TIGR01971">
    <property type="entry name" value="NuoI"/>
    <property type="match status" value="1"/>
</dbReference>
<dbReference type="NCBIfam" id="NF004537">
    <property type="entry name" value="PRK05888.1-3"/>
    <property type="match status" value="1"/>
</dbReference>
<dbReference type="PANTHER" id="PTHR47275">
    <property type="entry name" value="NAD(P)H-QUINONE OXIDOREDUCTASE SUBUNIT I, CHLOROPLASTIC"/>
    <property type="match status" value="1"/>
</dbReference>
<dbReference type="PANTHER" id="PTHR47275:SF1">
    <property type="entry name" value="NAD(P)H-QUINONE OXIDOREDUCTASE SUBUNIT I, CHLOROPLASTIC"/>
    <property type="match status" value="1"/>
</dbReference>
<dbReference type="Pfam" id="PF00037">
    <property type="entry name" value="Fer4"/>
    <property type="match status" value="2"/>
</dbReference>
<dbReference type="SUPFAM" id="SSF54862">
    <property type="entry name" value="4Fe-4S ferredoxins"/>
    <property type="match status" value="1"/>
</dbReference>
<dbReference type="PROSITE" id="PS00198">
    <property type="entry name" value="4FE4S_FER_1"/>
    <property type="match status" value="2"/>
</dbReference>
<dbReference type="PROSITE" id="PS51379">
    <property type="entry name" value="4FE4S_FER_2"/>
    <property type="match status" value="2"/>
</dbReference>
<geneLocation type="chloroplast"/>
<feature type="chain" id="PRO_0000250860" description="NAD(P)H-quinone oxidoreductase subunit I, chloroplastic">
    <location>
        <begin position="1"/>
        <end position="166"/>
    </location>
</feature>
<feature type="domain" description="4Fe-4S ferredoxin-type 1" evidence="1">
    <location>
        <begin position="55"/>
        <end position="84"/>
    </location>
</feature>
<feature type="domain" description="4Fe-4S ferredoxin-type 2" evidence="1">
    <location>
        <begin position="95"/>
        <end position="124"/>
    </location>
</feature>
<feature type="binding site" evidence="1">
    <location>
        <position position="64"/>
    </location>
    <ligand>
        <name>[4Fe-4S] cluster</name>
        <dbReference type="ChEBI" id="CHEBI:49883"/>
        <label>1</label>
    </ligand>
</feature>
<feature type="binding site" evidence="1">
    <location>
        <position position="67"/>
    </location>
    <ligand>
        <name>[4Fe-4S] cluster</name>
        <dbReference type="ChEBI" id="CHEBI:49883"/>
        <label>1</label>
    </ligand>
</feature>
<feature type="binding site" evidence="1">
    <location>
        <position position="70"/>
    </location>
    <ligand>
        <name>[4Fe-4S] cluster</name>
        <dbReference type="ChEBI" id="CHEBI:49883"/>
        <label>1</label>
    </ligand>
</feature>
<feature type="binding site" evidence="1">
    <location>
        <position position="74"/>
    </location>
    <ligand>
        <name>[4Fe-4S] cluster</name>
        <dbReference type="ChEBI" id="CHEBI:49883"/>
        <label>2</label>
    </ligand>
</feature>
<feature type="binding site" evidence="1">
    <location>
        <position position="104"/>
    </location>
    <ligand>
        <name>[4Fe-4S] cluster</name>
        <dbReference type="ChEBI" id="CHEBI:49883"/>
        <label>2</label>
    </ligand>
</feature>
<feature type="binding site" evidence="1">
    <location>
        <position position="107"/>
    </location>
    <ligand>
        <name>[4Fe-4S] cluster</name>
        <dbReference type="ChEBI" id="CHEBI:49883"/>
        <label>2</label>
    </ligand>
</feature>
<feature type="binding site" evidence="1">
    <location>
        <position position="110"/>
    </location>
    <ligand>
        <name>[4Fe-4S] cluster</name>
        <dbReference type="ChEBI" id="CHEBI:49883"/>
        <label>2</label>
    </ligand>
</feature>
<feature type="binding site" evidence="1">
    <location>
        <position position="114"/>
    </location>
    <ligand>
        <name>[4Fe-4S] cluster</name>
        <dbReference type="ChEBI" id="CHEBI:49883"/>
        <label>1</label>
    </ligand>
</feature>
<protein>
    <recommendedName>
        <fullName evidence="1">NAD(P)H-quinone oxidoreductase subunit I, chloroplastic</fullName>
        <ecNumber evidence="1">7.1.1.-</ecNumber>
    </recommendedName>
    <alternativeName>
        <fullName evidence="1">NAD(P)H dehydrogenase subunit I</fullName>
        <shortName evidence="1">NDH subunit I</shortName>
    </alternativeName>
    <alternativeName>
        <fullName evidence="1">NADH-plastoquinone oxidoreductase subunit I</fullName>
    </alternativeName>
</protein>